<reference key="1">
    <citation type="submission" date="2006-06" db="EMBL/GenBank/DDBJ databases">
        <title>Complete sequence of chromosome of Mycobacterium sp. MCS.</title>
        <authorList>
            <consortium name="US DOE Joint Genome Institute"/>
            <person name="Copeland A."/>
            <person name="Lucas S."/>
            <person name="Lapidus A."/>
            <person name="Barry K."/>
            <person name="Detter J.C."/>
            <person name="Glavina del Rio T."/>
            <person name="Hammon N."/>
            <person name="Israni S."/>
            <person name="Dalin E."/>
            <person name="Tice H."/>
            <person name="Pitluck S."/>
            <person name="Martinez M."/>
            <person name="Schmutz J."/>
            <person name="Larimer F."/>
            <person name="Land M."/>
            <person name="Hauser L."/>
            <person name="Kyrpides N."/>
            <person name="Kim E."/>
            <person name="Miller C.D."/>
            <person name="Hughes J.E."/>
            <person name="Anderson A.J."/>
            <person name="Sims R.C."/>
            <person name="Richardson P."/>
        </authorList>
    </citation>
    <scope>NUCLEOTIDE SEQUENCE [LARGE SCALE GENOMIC DNA]</scope>
    <source>
        <strain>MCS</strain>
    </source>
</reference>
<dbReference type="EC" id="2.7.7.105" evidence="1"/>
<dbReference type="EMBL" id="CP000384">
    <property type="protein sequence ID" value="ABG08035.1"/>
    <property type="molecule type" value="Genomic_DNA"/>
</dbReference>
<dbReference type="SMR" id="Q1BAP9"/>
<dbReference type="KEGG" id="mmc:Mmcs_1926"/>
<dbReference type="HOGENOM" id="CLU_076569_0_0_11"/>
<dbReference type="BioCyc" id="MSP164756:G1G6O-1970-MONOMER"/>
<dbReference type="UniPathway" id="UPA00071"/>
<dbReference type="GO" id="GO:0005525">
    <property type="term" value="F:GTP binding"/>
    <property type="evidence" value="ECO:0007669"/>
    <property type="project" value="UniProtKB-KW"/>
</dbReference>
<dbReference type="GO" id="GO:0043814">
    <property type="term" value="F:phospholactate guanylyltransferase activity"/>
    <property type="evidence" value="ECO:0007669"/>
    <property type="project" value="InterPro"/>
</dbReference>
<dbReference type="GO" id="GO:0052645">
    <property type="term" value="P:F420-0 metabolic process"/>
    <property type="evidence" value="ECO:0007669"/>
    <property type="project" value="UniProtKB-UniRule"/>
</dbReference>
<dbReference type="Gene3D" id="3.90.550.10">
    <property type="entry name" value="Spore Coat Polysaccharide Biosynthesis Protein SpsA, Chain A"/>
    <property type="match status" value="1"/>
</dbReference>
<dbReference type="HAMAP" id="MF_02114">
    <property type="entry name" value="CofC"/>
    <property type="match status" value="1"/>
</dbReference>
<dbReference type="InterPro" id="IPR002835">
    <property type="entry name" value="CofC"/>
</dbReference>
<dbReference type="InterPro" id="IPR029044">
    <property type="entry name" value="Nucleotide-diphossugar_trans"/>
</dbReference>
<dbReference type="NCBIfam" id="TIGR03552">
    <property type="entry name" value="F420_cofC"/>
    <property type="match status" value="1"/>
</dbReference>
<dbReference type="PANTHER" id="PTHR40392">
    <property type="entry name" value="2-PHOSPHO-L-LACTATE GUANYLYLTRANSFERASE"/>
    <property type="match status" value="1"/>
</dbReference>
<dbReference type="PANTHER" id="PTHR40392:SF1">
    <property type="entry name" value="2-PHOSPHO-L-LACTATE GUANYLYLTRANSFERASE"/>
    <property type="match status" value="1"/>
</dbReference>
<dbReference type="Pfam" id="PF01983">
    <property type="entry name" value="CofC"/>
    <property type="match status" value="1"/>
</dbReference>
<dbReference type="SUPFAM" id="SSF53448">
    <property type="entry name" value="Nucleotide-diphospho-sugar transferases"/>
    <property type="match status" value="1"/>
</dbReference>
<organism>
    <name type="scientific">Mycobacterium sp. (strain MCS)</name>
    <dbReference type="NCBI Taxonomy" id="164756"/>
    <lineage>
        <taxon>Bacteria</taxon>
        <taxon>Bacillati</taxon>
        <taxon>Actinomycetota</taxon>
        <taxon>Actinomycetes</taxon>
        <taxon>Mycobacteriales</taxon>
        <taxon>Mycobacteriaceae</taxon>
        <taxon>Mycobacterium</taxon>
    </lineage>
</organism>
<accession>Q1BAP9</accession>
<comment type="function">
    <text evidence="1">Guanylyltransferase that catalyzes the activation of phosphoenolpyruvate (PEP) as enolpyruvoyl-2-diphospho-5'-guanosine, via the condensation of PEP with GTP. It is involved in the biosynthesis of coenzyme F420, a hydride carrier cofactor.</text>
</comment>
<comment type="catalytic activity">
    <reaction evidence="1">
        <text>phosphoenolpyruvate + GTP + H(+) = enolpyruvoyl-2-diphospho-5'-guanosine + diphosphate</text>
        <dbReference type="Rhea" id="RHEA:30519"/>
        <dbReference type="ChEBI" id="CHEBI:15378"/>
        <dbReference type="ChEBI" id="CHEBI:33019"/>
        <dbReference type="ChEBI" id="CHEBI:37565"/>
        <dbReference type="ChEBI" id="CHEBI:58702"/>
        <dbReference type="ChEBI" id="CHEBI:143701"/>
        <dbReference type="EC" id="2.7.7.105"/>
    </reaction>
</comment>
<comment type="pathway">
    <text evidence="1">Cofactor biosynthesis; coenzyme F420 biosynthesis.</text>
</comment>
<comment type="similarity">
    <text evidence="1">Belongs to the CofC family.</text>
</comment>
<protein>
    <recommendedName>
        <fullName evidence="1">Phosphoenolpyruvate guanylyltransferase</fullName>
        <shortName evidence="1">PEP guanylyltransferase</shortName>
        <ecNumber evidence="1">2.7.7.105</ecNumber>
    </recommendedName>
</protein>
<sequence>MRGTTSNGAAPSGAGVAVVIAVKRLADAKTRLAPIFAPHDRETVVLAMLVDTVAAAAAVAAVTVVTPDPAAAEAARALGAQVLDDPTPAGHPDPLNNALRAAEAAVRATVPNVVALQGDLPALQAQELSEAIAAARTRPRSFVGDRHGTGTSALFAFGVPLDPRFGPDSAERHRRSGAVELTGSWPGLRYDIDTPDDLLAARRLGVGTQTARAVGAER</sequence>
<proteinExistence type="inferred from homology"/>
<name>FBID_MYCSS</name>
<feature type="chain" id="PRO_5000124151" description="Phosphoenolpyruvate guanylyltransferase">
    <location>
        <begin position="1"/>
        <end position="218"/>
    </location>
</feature>
<feature type="binding site" evidence="1">
    <location>
        <position position="151"/>
    </location>
    <ligand>
        <name>phosphoenolpyruvate</name>
        <dbReference type="ChEBI" id="CHEBI:58702"/>
    </ligand>
</feature>
<feature type="binding site" evidence="1">
    <location>
        <position position="166"/>
    </location>
    <ligand>
        <name>phosphoenolpyruvate</name>
        <dbReference type="ChEBI" id="CHEBI:58702"/>
    </ligand>
</feature>
<feature type="binding site" evidence="1">
    <location>
        <position position="169"/>
    </location>
    <ligand>
        <name>phosphoenolpyruvate</name>
        <dbReference type="ChEBI" id="CHEBI:58702"/>
    </ligand>
</feature>
<gene>
    <name evidence="1" type="primary">fbiD</name>
    <name type="ordered locus">Mmcs_1926</name>
</gene>
<evidence type="ECO:0000255" key="1">
    <source>
        <dbReference type="HAMAP-Rule" id="MF_02114"/>
    </source>
</evidence>
<keyword id="KW-0342">GTP-binding</keyword>
<keyword id="KW-0547">Nucleotide-binding</keyword>
<keyword id="KW-0548">Nucleotidyltransferase</keyword>
<keyword id="KW-0808">Transferase</keyword>